<sequence length="295" mass="31771">MNFTIPAPFTAIHTIFDVAFTTGLDSMLETIQEAVSAPLIACVTLWIIVQGILVIRGEVDTRSGITRVITVTIVVALIVGQANYQDYVVSIFEKTVPIFVQQFSVTGLPLQTVPAQLDTIFAVTQAVFQKIASEIGPMNDQDILAFQGAQWVLYGTLWSAFGVYDAVGILTKVLLAIGPLILVGYIFDRTRDIAAKWIGQLITYGLLLLLLNLVATIVILTEATALTLMLGVITFAGTTAAKIIGLYELDMFFLTGDALIVALPAIAGNIGGSYWSGATQSASSLYRRFAQVERG</sequence>
<comment type="function">
    <text>VirB proteins are suggested to act at the bacterial surface and there play an important role in directing T-DNA transfer to plant cells.</text>
</comment>
<comment type="subcellular location">
    <subcellularLocation>
        <location evidence="2">Membrane</location>
        <topology evidence="2">Multi-pass membrane protein</topology>
    </subcellularLocation>
</comment>
<comment type="similarity">
    <text evidence="2">Belongs to the TrbL/VirB6 family.</text>
</comment>
<gene>
    <name type="primary">virB6</name>
</gene>
<feature type="chain" id="PRO_0000065841" description="Protein VirB6">
    <location>
        <begin position="1"/>
        <end position="295"/>
    </location>
</feature>
<feature type="transmembrane region" description="Helical" evidence="1">
    <location>
        <begin position="35"/>
        <end position="55"/>
    </location>
</feature>
<feature type="transmembrane region" description="Helical" evidence="1">
    <location>
        <begin position="68"/>
        <end position="88"/>
    </location>
</feature>
<feature type="transmembrane region" description="Helical" evidence="1">
    <location>
        <begin position="167"/>
        <end position="187"/>
    </location>
</feature>
<feature type="transmembrane region" description="Helical" evidence="1">
    <location>
        <begin position="201"/>
        <end position="221"/>
    </location>
</feature>
<feature type="transmembrane region" description="Helical" evidence="1">
    <location>
        <begin position="226"/>
        <end position="246"/>
    </location>
</feature>
<feature type="transmembrane region" description="Helical" evidence="1">
    <location>
        <begin position="251"/>
        <end position="271"/>
    </location>
</feature>
<dbReference type="EMBL" id="X06826">
    <property type="protein sequence ID" value="CAA29977.1"/>
    <property type="molecule type" value="Genomic_DNA"/>
</dbReference>
<dbReference type="PIR" id="S00783">
    <property type="entry name" value="B7AG55"/>
</dbReference>
<dbReference type="RefSeq" id="NP_059804.1">
    <property type="nucleotide sequence ID" value="NC_002377.1"/>
</dbReference>
<dbReference type="SMR" id="P05356"/>
<dbReference type="TCDB" id="3.A.7.1.1">
    <property type="family name" value="the type iv (conjugal dna-protein transfer or virb) secretory pathway (ivsp) family"/>
</dbReference>
<dbReference type="GO" id="GO:0016020">
    <property type="term" value="C:membrane"/>
    <property type="evidence" value="ECO:0007669"/>
    <property type="project" value="UniProtKB-SubCell"/>
</dbReference>
<dbReference type="GO" id="GO:0030255">
    <property type="term" value="P:protein secretion by the type IV secretion system"/>
    <property type="evidence" value="ECO:0007669"/>
    <property type="project" value="InterPro"/>
</dbReference>
<dbReference type="InterPro" id="IPR007688">
    <property type="entry name" value="Conjugal_tfr_TrbL/VirB6"/>
</dbReference>
<dbReference type="NCBIfam" id="NF010426">
    <property type="entry name" value="PRK13852.1"/>
    <property type="match status" value="1"/>
</dbReference>
<dbReference type="Pfam" id="PF04610">
    <property type="entry name" value="TrbL"/>
    <property type="match status" value="1"/>
</dbReference>
<organism>
    <name type="scientific">Agrobacterium tumefaciens (strain 15955)</name>
    <dbReference type="NCBI Taxonomy" id="190386"/>
    <lineage>
        <taxon>Bacteria</taxon>
        <taxon>Pseudomonadati</taxon>
        <taxon>Pseudomonadota</taxon>
        <taxon>Alphaproteobacteria</taxon>
        <taxon>Hyphomicrobiales</taxon>
        <taxon>Rhizobiaceae</taxon>
        <taxon>Rhizobium/Agrobacterium group</taxon>
        <taxon>Agrobacterium</taxon>
        <taxon>Agrobacterium tumefaciens complex</taxon>
    </lineage>
</organism>
<geneLocation type="plasmid">
    <name>pTi15955</name>
</geneLocation>
<keyword id="KW-0192">Crown gall tumor</keyword>
<keyword id="KW-0472">Membrane</keyword>
<keyword id="KW-0614">Plasmid</keyword>
<keyword id="KW-0812">Transmembrane</keyword>
<keyword id="KW-1133">Transmembrane helix</keyword>
<protein>
    <recommendedName>
        <fullName>Protein VirB6</fullName>
    </recommendedName>
</protein>
<evidence type="ECO:0000255" key="1"/>
<evidence type="ECO:0000305" key="2"/>
<proteinExistence type="inferred from homology"/>
<accession>P05356</accession>
<name>VIRB6_AGRT9</name>
<reference key="1">
    <citation type="journal article" date="1988" name="Nucleic Acids Res.">
        <title>Analysis of the complete nucleotide sequence of the Agrobacterium tumefaciens virB operon.</title>
        <authorList>
            <person name="Thompson D.V."/>
            <person name="Melchers L.S."/>
            <person name="Idler K.B."/>
            <person name="Shilperoort R.A."/>
            <person name="Hooykaas P.J.J."/>
        </authorList>
    </citation>
    <scope>NUCLEOTIDE SEQUENCE [GENOMIC DNA]</scope>
</reference>